<feature type="chain" id="PRO_0000101910" description="UDP-N-acetylmuramoyl-L-alanyl-D-glutamate--2,6-diaminopimelate ligase">
    <location>
        <begin position="1"/>
        <end position="491"/>
    </location>
</feature>
<feature type="short sequence motif" description="Meso-diaminopimelate recognition motif">
    <location>
        <begin position="407"/>
        <end position="410"/>
    </location>
</feature>
<feature type="binding site" evidence="1">
    <location>
        <position position="30"/>
    </location>
    <ligand>
        <name>UDP-N-acetyl-alpha-D-muramoyl-L-alanyl-D-glutamate</name>
        <dbReference type="ChEBI" id="CHEBI:83900"/>
    </ligand>
</feature>
<feature type="binding site" evidence="1">
    <location>
        <begin position="108"/>
        <end position="114"/>
    </location>
    <ligand>
        <name>ATP</name>
        <dbReference type="ChEBI" id="CHEBI:30616"/>
    </ligand>
</feature>
<feature type="binding site" evidence="1">
    <location>
        <position position="149"/>
    </location>
    <ligand>
        <name>UDP-N-acetyl-alpha-D-muramoyl-L-alanyl-D-glutamate</name>
        <dbReference type="ChEBI" id="CHEBI:83900"/>
    </ligand>
</feature>
<feature type="binding site" evidence="1">
    <location>
        <begin position="150"/>
        <end position="151"/>
    </location>
    <ligand>
        <name>UDP-N-acetyl-alpha-D-muramoyl-L-alanyl-D-glutamate</name>
        <dbReference type="ChEBI" id="CHEBI:83900"/>
    </ligand>
</feature>
<feature type="binding site" evidence="1">
    <location>
        <position position="177"/>
    </location>
    <ligand>
        <name>UDP-N-acetyl-alpha-D-muramoyl-L-alanyl-D-glutamate</name>
        <dbReference type="ChEBI" id="CHEBI:83900"/>
    </ligand>
</feature>
<feature type="binding site" evidence="1">
    <location>
        <position position="183"/>
    </location>
    <ligand>
        <name>UDP-N-acetyl-alpha-D-muramoyl-L-alanyl-D-glutamate</name>
        <dbReference type="ChEBI" id="CHEBI:83900"/>
    </ligand>
</feature>
<feature type="binding site" evidence="1">
    <location>
        <position position="185"/>
    </location>
    <ligand>
        <name>UDP-N-acetyl-alpha-D-muramoyl-L-alanyl-D-glutamate</name>
        <dbReference type="ChEBI" id="CHEBI:83900"/>
    </ligand>
</feature>
<feature type="binding site" evidence="1">
    <location>
        <position position="383"/>
    </location>
    <ligand>
        <name>meso-2,6-diaminopimelate</name>
        <dbReference type="ChEBI" id="CHEBI:57791"/>
    </ligand>
</feature>
<feature type="binding site" evidence="1">
    <location>
        <begin position="407"/>
        <end position="410"/>
    </location>
    <ligand>
        <name>meso-2,6-diaminopimelate</name>
        <dbReference type="ChEBI" id="CHEBI:57791"/>
    </ligand>
</feature>
<feature type="binding site" evidence="1">
    <location>
        <position position="458"/>
    </location>
    <ligand>
        <name>meso-2,6-diaminopimelate</name>
        <dbReference type="ChEBI" id="CHEBI:57791"/>
    </ligand>
</feature>
<feature type="binding site" evidence="1">
    <location>
        <position position="462"/>
    </location>
    <ligand>
        <name>meso-2,6-diaminopimelate</name>
        <dbReference type="ChEBI" id="CHEBI:57791"/>
    </ligand>
</feature>
<feature type="modified residue" description="N6-carboxylysine" evidence="1">
    <location>
        <position position="217"/>
    </location>
</feature>
<accession>Q71XX5</accession>
<keyword id="KW-0067">ATP-binding</keyword>
<keyword id="KW-0131">Cell cycle</keyword>
<keyword id="KW-0132">Cell division</keyword>
<keyword id="KW-0133">Cell shape</keyword>
<keyword id="KW-0961">Cell wall biogenesis/degradation</keyword>
<keyword id="KW-0963">Cytoplasm</keyword>
<keyword id="KW-0436">Ligase</keyword>
<keyword id="KW-0460">Magnesium</keyword>
<keyword id="KW-0547">Nucleotide-binding</keyword>
<keyword id="KW-0573">Peptidoglycan synthesis</keyword>
<gene>
    <name evidence="1" type="primary">murE</name>
    <name type="ordered locus">LMOf2365_2070</name>
</gene>
<reference key="1">
    <citation type="journal article" date="2004" name="Nucleic Acids Res.">
        <title>Whole genome comparisons of serotype 4b and 1/2a strains of the food-borne pathogen Listeria monocytogenes reveal new insights into the core genome components of this species.</title>
        <authorList>
            <person name="Nelson K.E."/>
            <person name="Fouts D.E."/>
            <person name="Mongodin E.F."/>
            <person name="Ravel J."/>
            <person name="DeBoy R.T."/>
            <person name="Kolonay J.F."/>
            <person name="Rasko D.A."/>
            <person name="Angiuoli S.V."/>
            <person name="Gill S.R."/>
            <person name="Paulsen I.T."/>
            <person name="Peterson J.D."/>
            <person name="White O."/>
            <person name="Nelson W.C."/>
            <person name="Nierman W.C."/>
            <person name="Beanan M.J."/>
            <person name="Brinkac L.M."/>
            <person name="Daugherty S.C."/>
            <person name="Dodson R.J."/>
            <person name="Durkin A.S."/>
            <person name="Madupu R."/>
            <person name="Haft D.H."/>
            <person name="Selengut J."/>
            <person name="Van Aken S.E."/>
            <person name="Khouri H.M."/>
            <person name="Fedorova N."/>
            <person name="Forberger H.A."/>
            <person name="Tran B."/>
            <person name="Kathariou S."/>
            <person name="Wonderling L.D."/>
            <person name="Uhlich G.A."/>
            <person name="Bayles D.O."/>
            <person name="Luchansky J.B."/>
            <person name="Fraser C.M."/>
        </authorList>
    </citation>
    <scope>NUCLEOTIDE SEQUENCE [LARGE SCALE GENOMIC DNA]</scope>
    <source>
        <strain>F2365</strain>
    </source>
</reference>
<dbReference type="EC" id="6.3.2.13" evidence="1"/>
<dbReference type="EMBL" id="AE017262">
    <property type="protein sequence ID" value="AAT04840.1"/>
    <property type="molecule type" value="Genomic_DNA"/>
</dbReference>
<dbReference type="RefSeq" id="WP_010958993.1">
    <property type="nucleotide sequence ID" value="NC_002973.6"/>
</dbReference>
<dbReference type="SMR" id="Q71XX5"/>
<dbReference type="KEGG" id="lmf:LMOf2365_2070"/>
<dbReference type="HOGENOM" id="CLU_022291_4_0_9"/>
<dbReference type="UniPathway" id="UPA00219"/>
<dbReference type="GO" id="GO:0005737">
    <property type="term" value="C:cytoplasm"/>
    <property type="evidence" value="ECO:0007669"/>
    <property type="project" value="UniProtKB-SubCell"/>
</dbReference>
<dbReference type="GO" id="GO:0005524">
    <property type="term" value="F:ATP binding"/>
    <property type="evidence" value="ECO:0007669"/>
    <property type="project" value="UniProtKB-UniRule"/>
</dbReference>
<dbReference type="GO" id="GO:0000287">
    <property type="term" value="F:magnesium ion binding"/>
    <property type="evidence" value="ECO:0007669"/>
    <property type="project" value="UniProtKB-UniRule"/>
</dbReference>
<dbReference type="GO" id="GO:0004326">
    <property type="term" value="F:tetrahydrofolylpolyglutamate synthase activity"/>
    <property type="evidence" value="ECO:0007669"/>
    <property type="project" value="InterPro"/>
</dbReference>
<dbReference type="GO" id="GO:0008765">
    <property type="term" value="F:UDP-N-acetylmuramoylalanyl-D-glutamate-2,6-diaminopimelate ligase activity"/>
    <property type="evidence" value="ECO:0007669"/>
    <property type="project" value="UniProtKB-UniRule"/>
</dbReference>
<dbReference type="GO" id="GO:0051301">
    <property type="term" value="P:cell division"/>
    <property type="evidence" value="ECO:0007669"/>
    <property type="project" value="UniProtKB-KW"/>
</dbReference>
<dbReference type="GO" id="GO:0071555">
    <property type="term" value="P:cell wall organization"/>
    <property type="evidence" value="ECO:0007669"/>
    <property type="project" value="UniProtKB-KW"/>
</dbReference>
<dbReference type="GO" id="GO:0009252">
    <property type="term" value="P:peptidoglycan biosynthetic process"/>
    <property type="evidence" value="ECO:0007669"/>
    <property type="project" value="UniProtKB-UniRule"/>
</dbReference>
<dbReference type="GO" id="GO:0008360">
    <property type="term" value="P:regulation of cell shape"/>
    <property type="evidence" value="ECO:0007669"/>
    <property type="project" value="UniProtKB-KW"/>
</dbReference>
<dbReference type="FunFam" id="3.40.1390.10:FF:000005">
    <property type="entry name" value="UDP-N-acetylmuramoyl-L-alanyl-D-glutamate--2,6-diaminopimelate ligase"/>
    <property type="match status" value="1"/>
</dbReference>
<dbReference type="FunFam" id="3.90.190.20:FF:000006">
    <property type="entry name" value="UDP-N-acetylmuramoyl-L-alanyl-D-glutamate--2,6-diaminopimelate ligase"/>
    <property type="match status" value="1"/>
</dbReference>
<dbReference type="Gene3D" id="3.90.190.20">
    <property type="entry name" value="Mur ligase, C-terminal domain"/>
    <property type="match status" value="1"/>
</dbReference>
<dbReference type="Gene3D" id="3.40.1190.10">
    <property type="entry name" value="Mur-like, catalytic domain"/>
    <property type="match status" value="1"/>
</dbReference>
<dbReference type="Gene3D" id="3.40.1390.10">
    <property type="entry name" value="MurE/MurF, N-terminal domain"/>
    <property type="match status" value="1"/>
</dbReference>
<dbReference type="HAMAP" id="MF_00208">
    <property type="entry name" value="MurE"/>
    <property type="match status" value="1"/>
</dbReference>
<dbReference type="InterPro" id="IPR018109">
    <property type="entry name" value="Folylpolyglutamate_synth_CS"/>
</dbReference>
<dbReference type="InterPro" id="IPR036565">
    <property type="entry name" value="Mur-like_cat_sf"/>
</dbReference>
<dbReference type="InterPro" id="IPR004101">
    <property type="entry name" value="Mur_ligase_C"/>
</dbReference>
<dbReference type="InterPro" id="IPR036615">
    <property type="entry name" value="Mur_ligase_C_dom_sf"/>
</dbReference>
<dbReference type="InterPro" id="IPR013221">
    <property type="entry name" value="Mur_ligase_cen"/>
</dbReference>
<dbReference type="InterPro" id="IPR000713">
    <property type="entry name" value="Mur_ligase_N"/>
</dbReference>
<dbReference type="InterPro" id="IPR035911">
    <property type="entry name" value="MurE/MurF_N"/>
</dbReference>
<dbReference type="InterPro" id="IPR005761">
    <property type="entry name" value="UDP-N-AcMur-Glu-dNH2Pim_ligase"/>
</dbReference>
<dbReference type="NCBIfam" id="TIGR01085">
    <property type="entry name" value="murE"/>
    <property type="match status" value="1"/>
</dbReference>
<dbReference type="NCBIfam" id="NF001124">
    <property type="entry name" value="PRK00139.1-2"/>
    <property type="match status" value="1"/>
</dbReference>
<dbReference type="NCBIfam" id="NF001126">
    <property type="entry name" value="PRK00139.1-4"/>
    <property type="match status" value="1"/>
</dbReference>
<dbReference type="PANTHER" id="PTHR23135">
    <property type="entry name" value="MUR LIGASE FAMILY MEMBER"/>
    <property type="match status" value="1"/>
</dbReference>
<dbReference type="PANTHER" id="PTHR23135:SF4">
    <property type="entry name" value="UDP-N-ACETYLMURAMOYL-L-ALANYL-D-GLUTAMATE--2,6-DIAMINOPIMELATE LIGASE MURE HOMOLOG, CHLOROPLASTIC"/>
    <property type="match status" value="1"/>
</dbReference>
<dbReference type="Pfam" id="PF01225">
    <property type="entry name" value="Mur_ligase"/>
    <property type="match status" value="1"/>
</dbReference>
<dbReference type="Pfam" id="PF02875">
    <property type="entry name" value="Mur_ligase_C"/>
    <property type="match status" value="1"/>
</dbReference>
<dbReference type="Pfam" id="PF08245">
    <property type="entry name" value="Mur_ligase_M"/>
    <property type="match status" value="1"/>
</dbReference>
<dbReference type="SUPFAM" id="SSF53623">
    <property type="entry name" value="MurD-like peptide ligases, catalytic domain"/>
    <property type="match status" value="1"/>
</dbReference>
<dbReference type="SUPFAM" id="SSF53244">
    <property type="entry name" value="MurD-like peptide ligases, peptide-binding domain"/>
    <property type="match status" value="1"/>
</dbReference>
<dbReference type="SUPFAM" id="SSF63418">
    <property type="entry name" value="MurE/MurF N-terminal domain"/>
    <property type="match status" value="1"/>
</dbReference>
<proteinExistence type="inferred from homology"/>
<organism>
    <name type="scientific">Listeria monocytogenes serotype 4b (strain F2365)</name>
    <dbReference type="NCBI Taxonomy" id="265669"/>
    <lineage>
        <taxon>Bacteria</taxon>
        <taxon>Bacillati</taxon>
        <taxon>Bacillota</taxon>
        <taxon>Bacilli</taxon>
        <taxon>Bacillales</taxon>
        <taxon>Listeriaceae</taxon>
        <taxon>Listeria</taxon>
    </lineage>
</organism>
<protein>
    <recommendedName>
        <fullName evidence="1">UDP-N-acetylmuramoyl-L-alanyl-D-glutamate--2,6-diaminopimelate ligase</fullName>
        <ecNumber evidence="1">6.3.2.13</ecNumber>
    </recommendedName>
    <alternativeName>
        <fullName evidence="1">Meso-A2pm-adding enzyme</fullName>
    </alternativeName>
    <alternativeName>
        <fullName evidence="1">Meso-diaminopimelate-adding enzyme</fullName>
    </alternativeName>
    <alternativeName>
        <fullName evidence="1">UDP-MurNAc-L-Ala-D-Glu:meso-diaminopimelate ligase</fullName>
    </alternativeName>
    <alternativeName>
        <fullName evidence="1">UDP-MurNAc-tripeptide synthetase</fullName>
    </alternativeName>
    <alternativeName>
        <fullName evidence="1">UDP-N-acetylmuramyl-tripeptide synthetase</fullName>
    </alternativeName>
</protein>
<sequence>MKLNELMQAIPVFTGEASETIEISHIAQDSRKVKPGTLFICIDGELVDGHQFASRAVELGAVAIIAEKQLDVSIPVIYVRDSKRAMAMLADYFYGSPTQALKLVGITGTNGKTTVSHLVEQIVRENGEQTGLIGTMYRKIGDQILETKNTTPDSLTLQETFRDMLLSGVSTAVMEVSSHALVQGRVYGSDYDVAVFMNLSQDHLDYHHTMEEYANAKSLLFAQLGNSYHTSNPKIAVLNADDEESVRMQKATAAHVITFGIKQQADFKANNIRITSHGSTFDLRTPIGNFTLKIKMIGNFSVYNVLAAIATSFALHIPMEKAIKTVESIPGVKGRFELVHAGQEFPVIVDYAHTPDGLLNVLETIAEFAEKRVFVVVGCGGDRDKGKRPQMAKIAVDYATNPIFTSDNPRSENPRAIIEDMIQGVPYSDSYVVHENRRDAIRFAVNEAEAGDVILIAGKGHEDYQVIGDEVIDFDDRVEARIAIEKKLGLA</sequence>
<name>MURE_LISMF</name>
<evidence type="ECO:0000255" key="1">
    <source>
        <dbReference type="HAMAP-Rule" id="MF_00208"/>
    </source>
</evidence>
<comment type="function">
    <text evidence="1">Catalyzes the addition of meso-diaminopimelic acid to the nucleotide precursor UDP-N-acetylmuramoyl-L-alanyl-D-glutamate (UMAG) in the biosynthesis of bacterial cell-wall peptidoglycan.</text>
</comment>
<comment type="catalytic activity">
    <reaction evidence="1">
        <text>UDP-N-acetyl-alpha-D-muramoyl-L-alanyl-D-glutamate + meso-2,6-diaminopimelate + ATP = UDP-N-acetyl-alpha-D-muramoyl-L-alanyl-gamma-D-glutamyl-meso-2,6-diaminopimelate + ADP + phosphate + H(+)</text>
        <dbReference type="Rhea" id="RHEA:23676"/>
        <dbReference type="ChEBI" id="CHEBI:15378"/>
        <dbReference type="ChEBI" id="CHEBI:30616"/>
        <dbReference type="ChEBI" id="CHEBI:43474"/>
        <dbReference type="ChEBI" id="CHEBI:57791"/>
        <dbReference type="ChEBI" id="CHEBI:83900"/>
        <dbReference type="ChEBI" id="CHEBI:83905"/>
        <dbReference type="ChEBI" id="CHEBI:456216"/>
        <dbReference type="EC" id="6.3.2.13"/>
    </reaction>
</comment>
<comment type="cofactor">
    <cofactor evidence="1">
        <name>Mg(2+)</name>
        <dbReference type="ChEBI" id="CHEBI:18420"/>
    </cofactor>
</comment>
<comment type="pathway">
    <text evidence="1">Cell wall biogenesis; peptidoglycan biosynthesis.</text>
</comment>
<comment type="subcellular location">
    <subcellularLocation>
        <location evidence="1">Cytoplasm</location>
    </subcellularLocation>
</comment>
<comment type="PTM">
    <text evidence="1">Carboxylation is probably crucial for Mg(2+) binding and, consequently, for the gamma-phosphate positioning of ATP.</text>
</comment>
<comment type="similarity">
    <text evidence="1">Belongs to the MurCDEF family. MurE subfamily.</text>
</comment>